<dbReference type="EC" id="5.3.1.14" evidence="1"/>
<dbReference type="EMBL" id="CP000653">
    <property type="protein sequence ID" value="ABP62723.1"/>
    <property type="molecule type" value="Genomic_DNA"/>
</dbReference>
<dbReference type="RefSeq" id="WP_015961027.1">
    <property type="nucleotide sequence ID" value="NC_009436.1"/>
</dbReference>
<dbReference type="SMR" id="A4WG93"/>
<dbReference type="STRING" id="399742.Ent638_4068"/>
<dbReference type="KEGG" id="ent:Ent638_4068"/>
<dbReference type="eggNOG" id="COG4806">
    <property type="taxonomic scope" value="Bacteria"/>
</dbReference>
<dbReference type="HOGENOM" id="CLU_052790_0_0_6"/>
<dbReference type="OrthoDB" id="9766697at2"/>
<dbReference type="UniPathway" id="UPA00541">
    <property type="reaction ID" value="UER00601"/>
</dbReference>
<dbReference type="Proteomes" id="UP000000230">
    <property type="component" value="Chromosome"/>
</dbReference>
<dbReference type="GO" id="GO:0005737">
    <property type="term" value="C:cytoplasm"/>
    <property type="evidence" value="ECO:0007669"/>
    <property type="project" value="UniProtKB-SubCell"/>
</dbReference>
<dbReference type="GO" id="GO:0008740">
    <property type="term" value="F:L-rhamnose isomerase activity"/>
    <property type="evidence" value="ECO:0007669"/>
    <property type="project" value="UniProtKB-UniRule"/>
</dbReference>
<dbReference type="GO" id="GO:0030145">
    <property type="term" value="F:manganese ion binding"/>
    <property type="evidence" value="ECO:0007669"/>
    <property type="project" value="UniProtKB-UniRule"/>
</dbReference>
<dbReference type="GO" id="GO:0019324">
    <property type="term" value="P:L-lyxose metabolic process"/>
    <property type="evidence" value="ECO:0007669"/>
    <property type="project" value="TreeGrafter"/>
</dbReference>
<dbReference type="GO" id="GO:0019301">
    <property type="term" value="P:rhamnose catabolic process"/>
    <property type="evidence" value="ECO:0007669"/>
    <property type="project" value="UniProtKB-UniRule"/>
</dbReference>
<dbReference type="FunFam" id="3.20.20.150:FF:000006">
    <property type="entry name" value="L-rhamnose isomerase"/>
    <property type="match status" value="1"/>
</dbReference>
<dbReference type="Gene3D" id="3.20.20.150">
    <property type="entry name" value="Divalent-metal-dependent TIM barrel enzymes"/>
    <property type="match status" value="1"/>
</dbReference>
<dbReference type="HAMAP" id="MF_00541">
    <property type="entry name" value="RhaA"/>
    <property type="match status" value="1"/>
</dbReference>
<dbReference type="InterPro" id="IPR050337">
    <property type="entry name" value="L-rhamnose_isomerase"/>
</dbReference>
<dbReference type="InterPro" id="IPR009308">
    <property type="entry name" value="Rhamnose_isomerase"/>
</dbReference>
<dbReference type="InterPro" id="IPR036237">
    <property type="entry name" value="Xyl_isomerase-like_sf"/>
</dbReference>
<dbReference type="NCBIfam" id="NF002203">
    <property type="entry name" value="PRK01076.1"/>
    <property type="match status" value="1"/>
</dbReference>
<dbReference type="NCBIfam" id="TIGR01748">
    <property type="entry name" value="rhaA"/>
    <property type="match status" value="1"/>
</dbReference>
<dbReference type="PANTHER" id="PTHR30268">
    <property type="entry name" value="L-RHAMNOSE ISOMERASE"/>
    <property type="match status" value="1"/>
</dbReference>
<dbReference type="PANTHER" id="PTHR30268:SF0">
    <property type="entry name" value="L-RHAMNOSE ISOMERASE"/>
    <property type="match status" value="1"/>
</dbReference>
<dbReference type="Pfam" id="PF06134">
    <property type="entry name" value="RhaA"/>
    <property type="match status" value="1"/>
</dbReference>
<dbReference type="SUPFAM" id="SSF51658">
    <property type="entry name" value="Xylose isomerase-like"/>
    <property type="match status" value="1"/>
</dbReference>
<reference key="1">
    <citation type="journal article" date="2010" name="PLoS Genet.">
        <title>Genome sequence of the plant growth promoting endophytic bacterium Enterobacter sp. 638.</title>
        <authorList>
            <person name="Taghavi S."/>
            <person name="van der Lelie D."/>
            <person name="Hoffman A."/>
            <person name="Zhang Y.B."/>
            <person name="Walla M.D."/>
            <person name="Vangronsveld J."/>
            <person name="Newman L."/>
            <person name="Monchy S."/>
        </authorList>
    </citation>
    <scope>NUCLEOTIDE SEQUENCE [LARGE SCALE GENOMIC DNA]</scope>
    <source>
        <strain>638</strain>
    </source>
</reference>
<feature type="chain" id="PRO_1000061061" description="L-rhamnose isomerase">
    <location>
        <begin position="1"/>
        <end position="419"/>
    </location>
</feature>
<feature type="binding site" evidence="1">
    <location>
        <position position="262"/>
    </location>
    <ligand>
        <name>Mn(2+)</name>
        <dbReference type="ChEBI" id="CHEBI:29035"/>
    </ligand>
</feature>
<feature type="binding site" evidence="1">
    <location>
        <position position="294"/>
    </location>
    <ligand>
        <name>Mn(2+)</name>
        <dbReference type="ChEBI" id="CHEBI:29035"/>
    </ligand>
</feature>
<feature type="binding site" evidence="1">
    <location>
        <position position="296"/>
    </location>
    <ligand>
        <name>Mn(2+)</name>
        <dbReference type="ChEBI" id="CHEBI:29035"/>
    </ligand>
</feature>
<proteinExistence type="inferred from homology"/>
<name>RHAA_ENT38</name>
<keyword id="KW-0963">Cytoplasm</keyword>
<keyword id="KW-0413">Isomerase</keyword>
<keyword id="KW-0464">Manganese</keyword>
<keyword id="KW-0479">Metal-binding</keyword>
<keyword id="KW-0684">Rhamnose metabolism</keyword>
<accession>A4WG93</accession>
<organism>
    <name type="scientific">Enterobacter sp. (strain 638)</name>
    <dbReference type="NCBI Taxonomy" id="399742"/>
    <lineage>
        <taxon>Bacteria</taxon>
        <taxon>Pseudomonadati</taxon>
        <taxon>Pseudomonadota</taxon>
        <taxon>Gammaproteobacteria</taxon>
        <taxon>Enterobacterales</taxon>
        <taxon>Enterobacteriaceae</taxon>
        <taxon>Enterobacter</taxon>
    </lineage>
</organism>
<comment type="function">
    <text evidence="1">Catalyzes the interconversion of L-rhamnose and L-rhamnulose.</text>
</comment>
<comment type="catalytic activity">
    <reaction evidence="1">
        <text>L-rhamnopyranose = L-rhamnulose</text>
        <dbReference type="Rhea" id="RHEA:23160"/>
        <dbReference type="ChEBI" id="CHEBI:17897"/>
        <dbReference type="ChEBI" id="CHEBI:62346"/>
        <dbReference type="EC" id="5.3.1.14"/>
    </reaction>
</comment>
<comment type="cofactor">
    <cofactor evidence="1">
        <name>Mn(2+)</name>
        <dbReference type="ChEBI" id="CHEBI:29035"/>
    </cofactor>
    <text evidence="1">Binds 1 Mn(2+) ion per subunit.</text>
</comment>
<comment type="pathway">
    <text evidence="1">Carbohydrate degradation; L-rhamnose degradation; glycerone phosphate from L-rhamnose: step 1/3.</text>
</comment>
<comment type="subunit">
    <text evidence="1">Homotetramer.</text>
</comment>
<comment type="subcellular location">
    <subcellularLocation>
        <location evidence="1">Cytoplasm</location>
    </subcellularLocation>
</comment>
<comment type="similarity">
    <text evidence="1">Belongs to the rhamnose isomerase family.</text>
</comment>
<evidence type="ECO:0000255" key="1">
    <source>
        <dbReference type="HAMAP-Rule" id="MF_00541"/>
    </source>
</evidence>
<sequence>MTTQLEQAWELAKQRFAAVGVDVEEALRQLDRLPVSMHCWQGDDVAGFENTGAALTGGIQATGNYPGKARNATELRADLELALSLIPGPKRLNLHAIYHEAPEPVGRNEIKPEHFKNWVEWAKANKLGLDFNPSCFSHPLSADGFTLSHADDEIRQFWIDHVKASRRVSAYFGEQLGTPSVMNIWIPDGMKDITVDRLAPRQRLLAALDEIISEKINPAHHIDAVESKLFGIGAESYTVGSNEFYMGYATSRQTALCLDAGHFHPTEVISDKISAAMLYVPRLLLHVSRPVRWDSDHVVLLDDETQAIASEIIRHDLFDRVHIGLDFFDASINRIAAWVIGTRNMKKALLRALLEPTAALKQLEENGDYTARLALLEEQKSLPWQAIWEMYCQRNDAPAGSQWLDNVRAYEKEVLSQRG</sequence>
<protein>
    <recommendedName>
        <fullName evidence="1">L-rhamnose isomerase</fullName>
        <ecNumber evidence="1">5.3.1.14</ecNumber>
    </recommendedName>
</protein>
<gene>
    <name evidence="1" type="primary">rhaA</name>
    <name type="ordered locus">Ent638_4068</name>
</gene>